<name>AAEB_EDWTF</name>
<protein>
    <recommendedName>
        <fullName>p-hydroxybenzoic acid efflux pump subunit AaeB</fullName>
        <shortName>pHBA efflux pump protein B</shortName>
    </recommendedName>
</protein>
<keyword id="KW-0997">Cell inner membrane</keyword>
<keyword id="KW-1003">Cell membrane</keyword>
<keyword id="KW-0472">Membrane</keyword>
<keyword id="KW-1185">Reference proteome</keyword>
<keyword id="KW-0812">Transmembrane</keyword>
<keyword id="KW-1133">Transmembrane helix</keyword>
<keyword id="KW-0813">Transport</keyword>
<sequence>MLHPRVIRLRFACKLTLAIVLSLLLGFYFGLQTPRWSALTAALVAAGPAFAAGGEPFAGAIRYRGWLRIIGTVLGSLCALLLMMLLIRAPLLMILLCCLWAGVCTWLSSLVRMENAYALGLSGYTALIIVVSCLGEPQFILQLALERCGEIVLGIACAVLADTLLAPRSVKGEVDRVVGGMLLGQLCLLQRCVDGRDSDAVDRSWHGLIRESHTLEGMRASLALESSRWPRACRRLAALHTLSLTLITRACEIFLTQRQTPTALPAPFLTLIAAPVKTPAEAYQRLKQLRRLLAAHGGHQLPPALIGWIDGASQLQLLAKGVASNVRIGRHEAAILAHDAAPRQIYSAQGHHALINGLRTWLATSLGALFWLWSGWNAGSGCMIMIAVVTSLAVRTPNPRMAAIDFLMGSLVALPVGALYYTVILPATQQSLVLLCLSLGALTFICGMEVQKRRLGSLGTLASTLNILVLSNPMRFPIESFVDSAIGQVIGCLLALVVLLAVRDRSRARTGRTLMRRLAFGAVAALRGEGTRGNLLPALYRQLFLLLTLFPDDIGRYRLALTLIVLQQRLAHSALPCDAERLRAIDAAATRLLTGRGAARRRGALLQLTTGLSDYADALVRQGAAGAALQPLHQLADVLHRYRGVLLG</sequence>
<evidence type="ECO:0000250" key="1"/>
<evidence type="ECO:0000255" key="2"/>
<evidence type="ECO:0000305" key="3"/>
<accession>E0T8U0</accession>
<dbReference type="EMBL" id="CP002154">
    <property type="protein sequence ID" value="ADM42923.1"/>
    <property type="molecule type" value="Genomic_DNA"/>
</dbReference>
<dbReference type="SMR" id="E0T8U0"/>
<dbReference type="KEGG" id="etd:ETAF_2821"/>
<dbReference type="PATRIC" id="fig|718251.5.peg.2940"/>
<dbReference type="HOGENOM" id="CLU_027647_0_0_6"/>
<dbReference type="Proteomes" id="UP000002230">
    <property type="component" value="Chromosome"/>
</dbReference>
<dbReference type="GO" id="GO:0005886">
    <property type="term" value="C:plasma membrane"/>
    <property type="evidence" value="ECO:0007669"/>
    <property type="project" value="UniProtKB-SubCell"/>
</dbReference>
<dbReference type="GO" id="GO:0022857">
    <property type="term" value="F:transmembrane transporter activity"/>
    <property type="evidence" value="ECO:0007669"/>
    <property type="project" value="UniProtKB-UniRule"/>
</dbReference>
<dbReference type="GO" id="GO:0046942">
    <property type="term" value="P:carboxylic acid transport"/>
    <property type="evidence" value="ECO:0007669"/>
    <property type="project" value="InterPro"/>
</dbReference>
<dbReference type="InterPro" id="IPR006726">
    <property type="entry name" value="PHBA_efflux_AaeB/fusaric-R"/>
</dbReference>
<dbReference type="InterPro" id="IPR023706">
    <property type="entry name" value="PHBA_efflux_pump_AaeB"/>
</dbReference>
<dbReference type="NCBIfam" id="NF007916">
    <property type="entry name" value="PRK10631.1"/>
    <property type="match status" value="1"/>
</dbReference>
<dbReference type="PANTHER" id="PTHR30509:SF9">
    <property type="entry name" value="MULTIDRUG RESISTANCE PROTEIN MDTO"/>
    <property type="match status" value="1"/>
</dbReference>
<dbReference type="PANTHER" id="PTHR30509">
    <property type="entry name" value="P-HYDROXYBENZOIC ACID EFFLUX PUMP SUBUNIT-RELATED"/>
    <property type="match status" value="1"/>
</dbReference>
<dbReference type="Pfam" id="PF04632">
    <property type="entry name" value="FUSC"/>
    <property type="match status" value="1"/>
</dbReference>
<gene>
    <name type="primary">aaeB</name>
    <name type="ordered locus">ETAF_2821</name>
</gene>
<organism>
    <name type="scientific">Edwardsiella tarda (strain FL6-60)</name>
    <dbReference type="NCBI Taxonomy" id="718251"/>
    <lineage>
        <taxon>Bacteria</taxon>
        <taxon>Pseudomonadati</taxon>
        <taxon>Pseudomonadota</taxon>
        <taxon>Gammaproteobacteria</taxon>
        <taxon>Enterobacterales</taxon>
        <taxon>Hafniaceae</taxon>
        <taxon>Edwardsiella</taxon>
    </lineage>
</organism>
<proteinExistence type="inferred from homology"/>
<reference key="1">
    <citation type="submission" date="2010-08" db="EMBL/GenBank/DDBJ databases">
        <title>Genome comparisons of Edwardsiella bacteria analysed using deep sequencing technology.</title>
        <authorList>
            <person name="van Soest J.J."/>
            <person name="Henkel C.V."/>
            <person name="Jansen H.J."/>
            <person name="van den Hondel C.A.M.J.J."/>
            <person name="Bloemberg G.V."/>
            <person name="Meijer A.H."/>
            <person name="Spaink H.P."/>
        </authorList>
    </citation>
    <scope>NUCLEOTIDE SEQUENCE [LARGE SCALE GENOMIC DNA]</scope>
    <source>
        <strain>FL6-60</strain>
    </source>
</reference>
<comment type="function">
    <text evidence="1">Forms an efflux pump with AaeA. Could function as a metabolic relief valve, allowing to eliminate certain compounds when they accumulate to high levels in the cell (By similarity).</text>
</comment>
<comment type="subcellular location">
    <subcellularLocation>
        <location evidence="1">Cell inner membrane</location>
        <topology evidence="1">Multi-pass membrane protein</topology>
    </subcellularLocation>
</comment>
<comment type="similarity">
    <text evidence="3">Belongs to the aromatic acid exporter ArAE (TC 2.A.85) family.</text>
</comment>
<feature type="chain" id="PRO_0000414001" description="p-hydroxybenzoic acid efflux pump subunit AaeB">
    <location>
        <begin position="1"/>
        <end position="648"/>
    </location>
</feature>
<feature type="transmembrane region" description="Helical" evidence="2">
    <location>
        <begin position="11"/>
        <end position="31"/>
    </location>
</feature>
<feature type="transmembrane region" description="Helical" evidence="2">
    <location>
        <begin position="41"/>
        <end position="61"/>
    </location>
</feature>
<feature type="transmembrane region" description="Helical" evidence="2">
    <location>
        <begin position="65"/>
        <end position="87"/>
    </location>
</feature>
<feature type="transmembrane region" description="Helical" evidence="2">
    <location>
        <begin position="91"/>
        <end position="110"/>
    </location>
</feature>
<feature type="transmembrane region" description="Helical" evidence="2">
    <location>
        <begin position="125"/>
        <end position="145"/>
    </location>
</feature>
<feature type="transmembrane region" description="Helical" evidence="2">
    <location>
        <begin position="150"/>
        <end position="170"/>
    </location>
</feature>
<feature type="transmembrane region" description="Helical" evidence="2">
    <location>
        <begin position="369"/>
        <end position="389"/>
    </location>
</feature>
<feature type="transmembrane region" description="Helical" evidence="2">
    <location>
        <begin position="406"/>
        <end position="426"/>
    </location>
</feature>
<feature type="transmembrane region" description="Helical" evidence="2">
    <location>
        <begin position="430"/>
        <end position="450"/>
    </location>
</feature>
<feature type="transmembrane region" description="Helical" evidence="2">
    <location>
        <begin position="455"/>
        <end position="474"/>
    </location>
</feature>
<feature type="transmembrane region" description="Helical" evidence="2">
    <location>
        <begin position="481"/>
        <end position="501"/>
    </location>
</feature>